<organism>
    <name type="scientific">Myxococcus xanthus (strain DK1622)</name>
    <dbReference type="NCBI Taxonomy" id="246197"/>
    <lineage>
        <taxon>Bacteria</taxon>
        <taxon>Pseudomonadati</taxon>
        <taxon>Myxococcota</taxon>
        <taxon>Myxococcia</taxon>
        <taxon>Myxococcales</taxon>
        <taxon>Cystobacterineae</taxon>
        <taxon>Myxococcaceae</taxon>
        <taxon>Myxococcus</taxon>
    </lineage>
</organism>
<feature type="chain" id="PRO_0000345514" description="Small ribosomal subunit protein bS18">
    <location>
        <begin position="1"/>
        <end position="131"/>
    </location>
</feature>
<feature type="region of interest" description="Disordered" evidence="2">
    <location>
        <begin position="1"/>
        <end position="60"/>
    </location>
</feature>
<feature type="compositionally biased region" description="Polar residues" evidence="2">
    <location>
        <begin position="1"/>
        <end position="10"/>
    </location>
</feature>
<feature type="compositionally biased region" description="Gly residues" evidence="2">
    <location>
        <begin position="17"/>
        <end position="27"/>
    </location>
</feature>
<feature type="compositionally biased region" description="Basic and acidic residues" evidence="2">
    <location>
        <begin position="28"/>
        <end position="44"/>
    </location>
</feature>
<keyword id="KW-1185">Reference proteome</keyword>
<keyword id="KW-0687">Ribonucleoprotein</keyword>
<keyword id="KW-0689">Ribosomal protein</keyword>
<keyword id="KW-0694">RNA-binding</keyword>
<keyword id="KW-0699">rRNA-binding</keyword>
<accession>Q1D290</accession>
<name>RS18_MYXXD</name>
<evidence type="ECO:0000255" key="1">
    <source>
        <dbReference type="HAMAP-Rule" id="MF_00270"/>
    </source>
</evidence>
<evidence type="ECO:0000256" key="2">
    <source>
        <dbReference type="SAM" id="MobiDB-lite"/>
    </source>
</evidence>
<evidence type="ECO:0000305" key="3"/>
<dbReference type="EMBL" id="CP000113">
    <property type="protein sequence ID" value="ABF90687.1"/>
    <property type="molecule type" value="Genomic_DNA"/>
</dbReference>
<dbReference type="RefSeq" id="WP_011555053.1">
    <property type="nucleotide sequence ID" value="NC_008095.1"/>
</dbReference>
<dbReference type="SMR" id="Q1D290"/>
<dbReference type="STRING" id="246197.MXAN_5079"/>
<dbReference type="EnsemblBacteria" id="ABF90687">
    <property type="protein sequence ID" value="ABF90687"/>
    <property type="gene ID" value="MXAN_5079"/>
</dbReference>
<dbReference type="GeneID" id="41362363"/>
<dbReference type="KEGG" id="mxa:MXAN_5079"/>
<dbReference type="eggNOG" id="COG0238">
    <property type="taxonomic scope" value="Bacteria"/>
</dbReference>
<dbReference type="HOGENOM" id="CLU_148710_0_2_7"/>
<dbReference type="OrthoDB" id="9812008at2"/>
<dbReference type="Proteomes" id="UP000002402">
    <property type="component" value="Chromosome"/>
</dbReference>
<dbReference type="GO" id="GO:0022627">
    <property type="term" value="C:cytosolic small ribosomal subunit"/>
    <property type="evidence" value="ECO:0007669"/>
    <property type="project" value="TreeGrafter"/>
</dbReference>
<dbReference type="GO" id="GO:0070181">
    <property type="term" value="F:small ribosomal subunit rRNA binding"/>
    <property type="evidence" value="ECO:0007669"/>
    <property type="project" value="TreeGrafter"/>
</dbReference>
<dbReference type="GO" id="GO:0003735">
    <property type="term" value="F:structural constituent of ribosome"/>
    <property type="evidence" value="ECO:0007669"/>
    <property type="project" value="InterPro"/>
</dbReference>
<dbReference type="GO" id="GO:0006412">
    <property type="term" value="P:translation"/>
    <property type="evidence" value="ECO:0007669"/>
    <property type="project" value="UniProtKB-UniRule"/>
</dbReference>
<dbReference type="Gene3D" id="4.10.640.10">
    <property type="entry name" value="Ribosomal protein S18"/>
    <property type="match status" value="1"/>
</dbReference>
<dbReference type="HAMAP" id="MF_00270">
    <property type="entry name" value="Ribosomal_bS18"/>
    <property type="match status" value="1"/>
</dbReference>
<dbReference type="InterPro" id="IPR001648">
    <property type="entry name" value="Ribosomal_bS18"/>
</dbReference>
<dbReference type="InterPro" id="IPR036870">
    <property type="entry name" value="Ribosomal_bS18_sf"/>
</dbReference>
<dbReference type="NCBIfam" id="TIGR00165">
    <property type="entry name" value="S18"/>
    <property type="match status" value="1"/>
</dbReference>
<dbReference type="PANTHER" id="PTHR13479">
    <property type="entry name" value="30S RIBOSOMAL PROTEIN S18"/>
    <property type="match status" value="1"/>
</dbReference>
<dbReference type="PANTHER" id="PTHR13479:SF40">
    <property type="entry name" value="SMALL RIBOSOMAL SUBUNIT PROTEIN BS18M"/>
    <property type="match status" value="1"/>
</dbReference>
<dbReference type="Pfam" id="PF01084">
    <property type="entry name" value="Ribosomal_S18"/>
    <property type="match status" value="1"/>
</dbReference>
<dbReference type="PRINTS" id="PR00974">
    <property type="entry name" value="RIBOSOMALS18"/>
</dbReference>
<dbReference type="SUPFAM" id="SSF46911">
    <property type="entry name" value="Ribosomal protein S18"/>
    <property type="match status" value="1"/>
</dbReference>
<protein>
    <recommendedName>
        <fullName evidence="1">Small ribosomal subunit protein bS18</fullName>
    </recommendedName>
    <alternativeName>
        <fullName evidence="3">30S ribosomal protein S18</fullName>
    </alternativeName>
</protein>
<reference key="1">
    <citation type="journal article" date="2006" name="Proc. Natl. Acad. Sci. U.S.A.">
        <title>Evolution of sensory complexity recorded in a myxobacterial genome.</title>
        <authorList>
            <person name="Goldman B.S."/>
            <person name="Nierman W.C."/>
            <person name="Kaiser D."/>
            <person name="Slater S.C."/>
            <person name="Durkin A.S."/>
            <person name="Eisen J.A."/>
            <person name="Ronning C.M."/>
            <person name="Barbazuk W.B."/>
            <person name="Blanchard M."/>
            <person name="Field C."/>
            <person name="Halling C."/>
            <person name="Hinkle G."/>
            <person name="Iartchuk O."/>
            <person name="Kim H.S."/>
            <person name="Mackenzie C."/>
            <person name="Madupu R."/>
            <person name="Miller N."/>
            <person name="Shvartsbeyn A."/>
            <person name="Sullivan S.A."/>
            <person name="Vaudin M."/>
            <person name="Wiegand R."/>
            <person name="Kaplan H.B."/>
        </authorList>
    </citation>
    <scope>NUCLEOTIDE SEQUENCE [LARGE SCALE GENOMIC DNA]</scope>
    <source>
        <strain>DK1622</strain>
    </source>
</reference>
<gene>
    <name evidence="1" type="primary">rpsR</name>
    <name type="ordered locus">MXAN_5079</name>
</gene>
<comment type="function">
    <text evidence="1">Binds as a heterodimer with protein bS6 to the central domain of the 16S rRNA, where it helps stabilize the platform of the 30S subunit.</text>
</comment>
<comment type="subunit">
    <text evidence="1">Part of the 30S ribosomal subunit. Forms a tight heterodimer with protein bS6.</text>
</comment>
<comment type="similarity">
    <text evidence="1">Belongs to the bacterial ribosomal protein bS18 family.</text>
</comment>
<sequence length="131" mass="13583">MSNGTDSKTASAPPARSGGGFGGGGSRGGDRGDRGDRGGDRGDRGGGLGGDDDKRGGGRGFGRKKVCRFCAEKNASVDFKDQATLKYFVTERGKIIPRRISGNCAKHQREVAVAIKRARGIALLPYNAVVG</sequence>
<proteinExistence type="inferred from homology"/>